<reference evidence="5" key="1">
    <citation type="journal article" date="2008" name="J. Proteomics">
        <title>A proteomics approach to identify proteins differentially expressed in Douglas-fir seedlings infected by Phellinus sulphurascens.</title>
        <authorList>
            <person name="Islam M.A."/>
            <person name="Sturrock R.N."/>
            <person name="Ekramoddoullah A.K.M."/>
        </authorList>
    </citation>
    <scope>IDENTIFICATION BY MASS SPECTROMETRY</scope>
</reference>
<evidence type="ECO:0000250" key="1">
    <source>
        <dbReference type="UniProtKB" id="P52580"/>
    </source>
</evidence>
<evidence type="ECO:0000250" key="2">
    <source>
        <dbReference type="UniProtKB" id="Q9LD14"/>
    </source>
</evidence>
<evidence type="ECO:0000255" key="3"/>
<evidence type="ECO:0000303" key="4">
    <source>
    </source>
</evidence>
<evidence type="ECO:0000305" key="5"/>
<dbReference type="EC" id="1.3.1.-"/>
<dbReference type="GO" id="GO:0005737">
    <property type="term" value="C:cytoplasm"/>
    <property type="evidence" value="ECO:0007669"/>
    <property type="project" value="UniProtKB-SubCell"/>
</dbReference>
<dbReference type="GO" id="GO:0016491">
    <property type="term" value="F:oxidoreductase activity"/>
    <property type="evidence" value="ECO:0007669"/>
    <property type="project" value="UniProtKB-KW"/>
</dbReference>
<sequence length="49" mass="5356">ILIIGGTGYIGRKVDVVISAVKFLPSEFGNDVDRVVFVKEEDIGTFTIK</sequence>
<protein>
    <recommendedName>
        <fullName evidence="1 4">Isoflavone reductase homolog 2</fullName>
        <ecNumber>1.3.1.-</ecNumber>
    </recommendedName>
</protein>
<comment type="subcellular location">
    <subcellularLocation>
        <location evidence="1">Cytoplasm</location>
    </subcellularLocation>
</comment>
<comment type="similarity">
    <text evidence="3">Belongs to the NmrA-type oxidoreductase family. Isoflavone reductase subfamily.</text>
</comment>
<proteinExistence type="evidence at protein level"/>
<keyword id="KW-0963">Cytoplasm</keyword>
<keyword id="KW-0521">NADP</keyword>
<keyword id="KW-0560">Oxidoreductase</keyword>
<accession>P85950</accession>
<name>IFRH2_PSEMZ</name>
<organism>
    <name type="scientific">Pseudotsuga menziesii</name>
    <name type="common">Douglas-fir</name>
    <name type="synonym">Abies menziesii</name>
    <dbReference type="NCBI Taxonomy" id="3357"/>
    <lineage>
        <taxon>Eukaryota</taxon>
        <taxon>Viridiplantae</taxon>
        <taxon>Streptophyta</taxon>
        <taxon>Embryophyta</taxon>
        <taxon>Tracheophyta</taxon>
        <taxon>Spermatophyta</taxon>
        <taxon>Pinopsida</taxon>
        <taxon>Pinidae</taxon>
        <taxon>Conifers I</taxon>
        <taxon>Pinales</taxon>
        <taxon>Pinaceae</taxon>
        <taxon>Pseudotsuga</taxon>
    </lineage>
</organism>
<feature type="chain" id="PRO_0000397950" description="Isoflavone reductase homolog 2">
    <location>
        <begin position="1" status="less than"/>
        <end position="49" status="greater than"/>
    </location>
</feature>
<feature type="binding site" evidence="2">
    <location>
        <begin position="5"/>
        <end position="11"/>
    </location>
    <ligand>
        <name>NADP(+)</name>
        <dbReference type="ChEBI" id="CHEBI:58349"/>
    </ligand>
</feature>
<feature type="non-consecutive residues" evidence="4">
    <location>
        <begin position="12"/>
        <end position="13"/>
    </location>
</feature>
<feature type="non-consecutive residues" evidence="4">
    <location>
        <begin position="22"/>
        <end position="23"/>
    </location>
</feature>
<feature type="non-consecutive residues" evidence="4">
    <location>
        <begin position="34"/>
        <end position="35"/>
    </location>
</feature>
<feature type="non-terminal residue" evidence="4">
    <location>
        <position position="1"/>
    </location>
</feature>
<feature type="non-terminal residue" evidence="4">
    <location>
        <position position="49"/>
    </location>
</feature>